<feature type="chain" id="PRO_0000105475" description="Beta sliding clamp">
    <location>
        <begin position="1"/>
        <end position="391"/>
    </location>
</feature>
<comment type="function">
    <text evidence="1">Confers DNA tethering and processivity to DNA polymerases and other proteins. Acts as a clamp, forming a ring around DNA (a reaction catalyzed by the clamp-loading complex) which diffuses in an ATP-independent manner freely and bidirectionally along dsDNA. Initially characterized for its ability to contact the catalytic subunit of DNA polymerase III (Pol III), a complex, multichain enzyme responsible for most of the replicative synthesis in bacteria; Pol III exhibits 3'-5' exonuclease proofreading activity. The beta chain is required for initiation of replication as well as for processivity of DNA replication.</text>
</comment>
<comment type="subunit">
    <text evidence="1">Forms a ring-shaped head-to-tail homodimer around DNA which binds and tethers DNA polymerases and other proteins to the DNA. The DNA replisome complex has a single clamp-loading complex (3 tau and 1 each of delta, delta', psi and chi subunits) which binds 3 Pol III cores (1 core on the leading strand and 2 on the lagging strand) each with a beta sliding clamp dimer. Additional proteins in the replisome are other copies of gamma, psi and chi, Ssb, DNA helicase and RNA primase.</text>
</comment>
<comment type="subcellular location">
    <subcellularLocation>
        <location evidence="1">Cytoplasm</location>
    </subcellularLocation>
</comment>
<comment type="similarity">
    <text evidence="2">Belongs to the beta sliding clamp family.</text>
</comment>
<name>DPO3B_SYNY3</name>
<keyword id="KW-0963">Cytoplasm</keyword>
<keyword id="KW-0235">DNA replication</keyword>
<keyword id="KW-0238">DNA-binding</keyword>
<keyword id="KW-0239">DNA-directed DNA polymerase</keyword>
<keyword id="KW-0548">Nucleotidyltransferase</keyword>
<keyword id="KW-1185">Reference proteome</keyword>
<keyword id="KW-0808">Transferase</keyword>
<accession>P72856</accession>
<evidence type="ECO:0000250" key="1">
    <source>
        <dbReference type="UniProtKB" id="P0A988"/>
    </source>
</evidence>
<evidence type="ECO:0000305" key="2"/>
<dbReference type="EMBL" id="BA000022">
    <property type="protein sequence ID" value="BAA16871.1"/>
    <property type="molecule type" value="Genomic_DNA"/>
</dbReference>
<dbReference type="PIR" id="S74720">
    <property type="entry name" value="S74720"/>
</dbReference>
<dbReference type="SMR" id="P72856"/>
<dbReference type="FunCoup" id="P72856">
    <property type="interactions" value="373"/>
</dbReference>
<dbReference type="STRING" id="1148.gene:10497730"/>
<dbReference type="PaxDb" id="1148-1651945"/>
<dbReference type="EnsemblBacteria" id="BAA16871">
    <property type="protein sequence ID" value="BAA16871"/>
    <property type="gene ID" value="BAA16871"/>
</dbReference>
<dbReference type="KEGG" id="syn:slr0965"/>
<dbReference type="eggNOG" id="COG0592">
    <property type="taxonomic scope" value="Bacteria"/>
</dbReference>
<dbReference type="InParanoid" id="P72856"/>
<dbReference type="PhylomeDB" id="P72856"/>
<dbReference type="Proteomes" id="UP000001425">
    <property type="component" value="Chromosome"/>
</dbReference>
<dbReference type="GO" id="GO:0005737">
    <property type="term" value="C:cytoplasm"/>
    <property type="evidence" value="ECO:0007669"/>
    <property type="project" value="UniProtKB-SubCell"/>
</dbReference>
<dbReference type="GO" id="GO:0009360">
    <property type="term" value="C:DNA polymerase III complex"/>
    <property type="evidence" value="ECO:0007669"/>
    <property type="project" value="InterPro"/>
</dbReference>
<dbReference type="GO" id="GO:0008408">
    <property type="term" value="F:3'-5' exonuclease activity"/>
    <property type="evidence" value="ECO:0007669"/>
    <property type="project" value="InterPro"/>
</dbReference>
<dbReference type="GO" id="GO:0003677">
    <property type="term" value="F:DNA binding"/>
    <property type="evidence" value="ECO:0007669"/>
    <property type="project" value="UniProtKB-KW"/>
</dbReference>
<dbReference type="GO" id="GO:0003887">
    <property type="term" value="F:DNA-directed DNA polymerase activity"/>
    <property type="evidence" value="ECO:0007669"/>
    <property type="project" value="UniProtKB-KW"/>
</dbReference>
<dbReference type="GO" id="GO:0006271">
    <property type="term" value="P:DNA strand elongation involved in DNA replication"/>
    <property type="evidence" value="ECO:0000318"/>
    <property type="project" value="GO_Central"/>
</dbReference>
<dbReference type="CDD" id="cd00140">
    <property type="entry name" value="beta_clamp"/>
    <property type="match status" value="1"/>
</dbReference>
<dbReference type="Gene3D" id="3.70.10.10">
    <property type="match status" value="1"/>
</dbReference>
<dbReference type="Gene3D" id="3.10.150.10">
    <property type="entry name" value="DNA Polymerase III, subunit A, domain 2"/>
    <property type="match status" value="1"/>
</dbReference>
<dbReference type="InterPro" id="IPR046938">
    <property type="entry name" value="DNA_clamp_sf"/>
</dbReference>
<dbReference type="InterPro" id="IPR001001">
    <property type="entry name" value="DNA_polIII_beta"/>
</dbReference>
<dbReference type="InterPro" id="IPR022635">
    <property type="entry name" value="DNA_polIII_beta_C"/>
</dbReference>
<dbReference type="InterPro" id="IPR022637">
    <property type="entry name" value="DNA_polIII_beta_cen"/>
</dbReference>
<dbReference type="InterPro" id="IPR022634">
    <property type="entry name" value="DNA_polIII_beta_N"/>
</dbReference>
<dbReference type="NCBIfam" id="TIGR00663">
    <property type="entry name" value="dnan"/>
    <property type="match status" value="1"/>
</dbReference>
<dbReference type="PANTHER" id="PTHR30478:SF0">
    <property type="entry name" value="BETA SLIDING CLAMP"/>
    <property type="match status" value="1"/>
</dbReference>
<dbReference type="PANTHER" id="PTHR30478">
    <property type="entry name" value="DNA POLYMERASE III SUBUNIT BETA"/>
    <property type="match status" value="1"/>
</dbReference>
<dbReference type="Pfam" id="PF00712">
    <property type="entry name" value="DNA_pol3_beta"/>
    <property type="match status" value="1"/>
</dbReference>
<dbReference type="Pfam" id="PF02767">
    <property type="entry name" value="DNA_pol3_beta_2"/>
    <property type="match status" value="1"/>
</dbReference>
<dbReference type="Pfam" id="PF02768">
    <property type="entry name" value="DNA_pol3_beta_3"/>
    <property type="match status" value="1"/>
</dbReference>
<dbReference type="PIRSF" id="PIRSF000804">
    <property type="entry name" value="DNA_pol_III_b"/>
    <property type="match status" value="1"/>
</dbReference>
<dbReference type="SMART" id="SM00480">
    <property type="entry name" value="POL3Bc"/>
    <property type="match status" value="1"/>
</dbReference>
<dbReference type="SUPFAM" id="SSF55979">
    <property type="entry name" value="DNA clamp"/>
    <property type="match status" value="3"/>
</dbReference>
<reference key="1">
    <citation type="journal article" date="1996" name="DNA Res.">
        <title>Sequence analysis of the genome of the unicellular cyanobacterium Synechocystis sp. strain PCC6803. II. Sequence determination of the entire genome and assignment of potential protein-coding regions.</title>
        <authorList>
            <person name="Kaneko T."/>
            <person name="Sato S."/>
            <person name="Kotani H."/>
            <person name="Tanaka A."/>
            <person name="Asamizu E."/>
            <person name="Nakamura Y."/>
            <person name="Miyajima N."/>
            <person name="Hirosawa M."/>
            <person name="Sugiura M."/>
            <person name="Sasamoto S."/>
            <person name="Kimura T."/>
            <person name="Hosouchi T."/>
            <person name="Matsuno A."/>
            <person name="Muraki A."/>
            <person name="Nakazaki N."/>
            <person name="Naruo K."/>
            <person name="Okumura S."/>
            <person name="Shimpo S."/>
            <person name="Takeuchi C."/>
            <person name="Wada T."/>
            <person name="Watanabe A."/>
            <person name="Yamada M."/>
            <person name="Yasuda M."/>
            <person name="Tabata S."/>
        </authorList>
    </citation>
    <scope>NUCLEOTIDE SEQUENCE [LARGE SCALE GENOMIC DNA]</scope>
    <source>
        <strain>ATCC 27184 / PCC 6803 / Kazusa</strain>
    </source>
</reference>
<sequence length="391" mass="42088">MKLICRQSDLSSGLSLVSRAVSSRPTHPVLGNVLLEADADKNYLRLTAFDLSLGIQSSFTADVQQSGRITLPAKLLNDIVSRLPDGDITLAIDPDGDAGDSHLTTITSESGRFQIRGLDADDFPALPTVEGVKPLLLPVATLNEGLRGALFAASTDETKQVLTGVHIKGSGDSLEFAATDGHRLAVVEAPTQIENDEGEAVITGSDLADFAVTIPARALRELERMVASQGNSDLVSLVVNDTQVIFELGDQRLTSRKLEGAYPAYDQLIPRQFSRTVTMERKRLITSLERVSVLADQKNNLVTFTLQSPGNQLQLAVEAQDLGHGEESMGAEIIGEGGQIAFNIKYLMDGLKALPSNDIQMQLNEGNQPVIFTPLGGLKMTYLVMPVRLVN</sequence>
<proteinExistence type="inferred from homology"/>
<organism>
    <name type="scientific">Synechocystis sp. (strain ATCC 27184 / PCC 6803 / Kazusa)</name>
    <dbReference type="NCBI Taxonomy" id="1111708"/>
    <lineage>
        <taxon>Bacteria</taxon>
        <taxon>Bacillati</taxon>
        <taxon>Cyanobacteriota</taxon>
        <taxon>Cyanophyceae</taxon>
        <taxon>Synechococcales</taxon>
        <taxon>Merismopediaceae</taxon>
        <taxon>Synechocystis</taxon>
    </lineage>
</organism>
<protein>
    <recommendedName>
        <fullName>Beta sliding clamp</fullName>
        <shortName>Beta clamp</shortName>
        <shortName>Sliding clamp</shortName>
    </recommendedName>
    <alternativeName>
        <fullName>Beta-clamp processivity factor</fullName>
    </alternativeName>
    <alternativeName>
        <fullName>DNA polymerase III beta sliding clamp subunit</fullName>
    </alternativeName>
    <alternativeName>
        <fullName>DNA polymerase III subunit beta</fullName>
    </alternativeName>
</protein>
<gene>
    <name type="primary">dnaN</name>
    <name type="ordered locus">slr0965</name>
</gene>